<accession>Q07DW9</accession>
<gene>
    <name type="primary">ST7</name>
</gene>
<comment type="subcellular location">
    <subcellularLocation>
        <location evidence="3">Membrane</location>
        <topology evidence="3">Multi-pass membrane protein</topology>
    </subcellularLocation>
</comment>
<comment type="similarity">
    <text evidence="3">Belongs to the ST7 family.</text>
</comment>
<reference key="1">
    <citation type="submission" date="2006-09" db="EMBL/GenBank/DDBJ databases">
        <title>NISC comparative sequencing initiative.</title>
        <authorList>
            <person name="Antonellis A."/>
            <person name="Ayele K."/>
            <person name="Benjamin B."/>
            <person name="Blakesley R.W."/>
            <person name="Boakye A."/>
            <person name="Bouffard G.G."/>
            <person name="Brinkley C."/>
            <person name="Brooks S."/>
            <person name="Chu G."/>
            <person name="Coleman H."/>
            <person name="Engle J."/>
            <person name="Gestole M."/>
            <person name="Greene A."/>
            <person name="Guan X."/>
            <person name="Gupta J."/>
            <person name="Haghighi P."/>
            <person name="Han J."/>
            <person name="Hansen N."/>
            <person name="Ho S.-L."/>
            <person name="Hu P."/>
            <person name="Hunter G."/>
            <person name="Hurle B."/>
            <person name="Idol J.R."/>
            <person name="Kwong P."/>
            <person name="Laric P."/>
            <person name="Larson S."/>
            <person name="Lee-Lin S.-Q."/>
            <person name="Legaspi R."/>
            <person name="Madden M."/>
            <person name="Maduro Q.L."/>
            <person name="Maduro V.B."/>
            <person name="Margulies E.H."/>
            <person name="Masiello C."/>
            <person name="Maskeri B."/>
            <person name="McDowell J."/>
            <person name="Mojidi H.A."/>
            <person name="Mullikin J.C."/>
            <person name="Oestreicher J.S."/>
            <person name="Park M."/>
            <person name="Portnoy M.E."/>
            <person name="Prasad A."/>
            <person name="Puri O."/>
            <person name="Reddix-Dugue N."/>
            <person name="Schandler K."/>
            <person name="Schueler M.G."/>
            <person name="Sison C."/>
            <person name="Stantripop S."/>
            <person name="Stephen E."/>
            <person name="Taye A."/>
            <person name="Thomas J.W."/>
            <person name="Thomas P.J."/>
            <person name="Tsipouri V."/>
            <person name="Ung L."/>
            <person name="Vogt J.L."/>
            <person name="Wetherby K.D."/>
            <person name="Young A."/>
            <person name="Green E.D."/>
        </authorList>
    </citation>
    <scope>NUCLEOTIDE SEQUENCE [LARGE SCALE GENOMIC DNA]</scope>
</reference>
<keyword id="KW-0325">Glycoprotein</keyword>
<keyword id="KW-0472">Membrane</keyword>
<keyword id="KW-0597">Phosphoprotein</keyword>
<keyword id="KW-0812">Transmembrane</keyword>
<keyword id="KW-1133">Transmembrane helix</keyword>
<name>ST7_MUNRE</name>
<proteinExistence type="inferred from homology"/>
<dbReference type="EMBL" id="DP000195">
    <property type="protein sequence ID" value="ABJ08873.1"/>
    <property type="molecule type" value="Genomic_DNA"/>
</dbReference>
<dbReference type="RefSeq" id="XP_065795300.1">
    <property type="nucleotide sequence ID" value="XM_065939228.1"/>
</dbReference>
<dbReference type="GlyCosmos" id="Q07DW9">
    <property type="glycosylation" value="1 site, No reported glycans"/>
</dbReference>
<dbReference type="GeneID" id="136170757"/>
<dbReference type="GO" id="GO:0016020">
    <property type="term" value="C:membrane"/>
    <property type="evidence" value="ECO:0007669"/>
    <property type="project" value="UniProtKB-SubCell"/>
</dbReference>
<dbReference type="CDD" id="cd11557">
    <property type="entry name" value="ST7"/>
    <property type="match status" value="1"/>
</dbReference>
<dbReference type="InterPro" id="IPR007311">
    <property type="entry name" value="ST7"/>
</dbReference>
<dbReference type="PANTHER" id="PTHR12745">
    <property type="entry name" value="SUPPRESSION OF TUMORIGENICITY 7"/>
    <property type="match status" value="1"/>
</dbReference>
<dbReference type="PANTHER" id="PTHR12745:SF10">
    <property type="entry name" value="SUPPRESSOR OF TUMORIGENICITY 7 PROTEIN"/>
    <property type="match status" value="1"/>
</dbReference>
<dbReference type="Pfam" id="PF04184">
    <property type="entry name" value="ST7"/>
    <property type="match status" value="1"/>
</dbReference>
<organism>
    <name type="scientific">Muntiacus reevesi</name>
    <name type="common">Reeves' muntjac</name>
    <name type="synonym">Cervus reevesi</name>
    <dbReference type="NCBI Taxonomy" id="9886"/>
    <lineage>
        <taxon>Eukaryota</taxon>
        <taxon>Metazoa</taxon>
        <taxon>Chordata</taxon>
        <taxon>Craniata</taxon>
        <taxon>Vertebrata</taxon>
        <taxon>Euteleostomi</taxon>
        <taxon>Mammalia</taxon>
        <taxon>Eutheria</taxon>
        <taxon>Laurasiatheria</taxon>
        <taxon>Artiodactyla</taxon>
        <taxon>Ruminantia</taxon>
        <taxon>Pecora</taxon>
        <taxon>Cervidae</taxon>
        <taxon>Muntiacinae</taxon>
        <taxon>Muntiacus</taxon>
    </lineage>
</organism>
<feature type="chain" id="PRO_0000339209" description="Suppressor of tumorigenicity 7 protein">
    <location>
        <begin position="1"/>
        <end position="585"/>
    </location>
</feature>
<feature type="transmembrane region" description="Helical" evidence="2">
    <location>
        <begin position="15"/>
        <end position="35"/>
    </location>
</feature>
<feature type="transmembrane region" description="Helical" evidence="2">
    <location>
        <begin position="62"/>
        <end position="82"/>
    </location>
</feature>
<feature type="transmembrane region" description="Helical" evidence="2">
    <location>
        <begin position="512"/>
        <end position="532"/>
    </location>
</feature>
<feature type="modified residue" description="Phosphoserine" evidence="1">
    <location>
        <position position="386"/>
    </location>
</feature>
<feature type="glycosylation site" description="N-linked (GlcNAc...) asparagine" evidence="2">
    <location>
        <position position="47"/>
    </location>
</feature>
<sequence length="585" mass="67153">MAEAGTGFLEQLKSCIVWSWTYLWTVWFFIVLFLVYILRVPLKINDNLSTVSMFLNTLTPKFYVALTGTSSLISGLILIFEWWYFRKYGTSFIEQVSVSHLRPLLGGVDNNSSNNSNSSNGDSDSNRQSVSECKVWRNPLNLFRGAEYNRYTWVTGREPLTYYDMNLSAQDHQTFFTCDSDHLRPADAIMQKAWRERNPQARISAAHEALEINEIRSRVEVPLIASSTIWEIKLLPKCATAYILLAEEEATTIAEAEKLFKQALKAGDGCYRRSQQLQHHGSQYEAQHRRDTNVLVYIKRRLAMCARRLGRTREAVKMMRDLMKEFPLLSMFNIHENLLEALLELQAYADVQAVLAKYDDISLPKSATICYTAALLKARAVSDKFSPEAASRRGLSTAEMNAVEAIHRAVEFNPHVPKYLLEMKSLILPPEHILKRGDSEAIAYAFFHLAHWKRVEGALNLLHCTWEGTFRMIPYPLEKGHLFYPYPICTETADRELLPSFHEVSVYPKKELPFFILFTAGLCSFTAMLALLTHQFPELMGVFAKAMIDIFCSAEFRDWNCESIFMRVEDELEIPPAPQSQHFQN</sequence>
<protein>
    <recommendedName>
        <fullName>Suppressor of tumorigenicity 7 protein</fullName>
    </recommendedName>
</protein>
<evidence type="ECO:0000250" key="1">
    <source>
        <dbReference type="UniProtKB" id="Q9NRC1"/>
    </source>
</evidence>
<evidence type="ECO:0000255" key="2"/>
<evidence type="ECO:0000305" key="3"/>